<keyword id="KW-0010">Activator</keyword>
<keyword id="KW-0217">Developmental protein</keyword>
<keyword id="KW-0238">DNA-binding</keyword>
<keyword id="KW-0306">Gastrulation</keyword>
<keyword id="KW-0539">Nucleus</keyword>
<keyword id="KW-1185">Reference proteome</keyword>
<keyword id="KW-0804">Transcription</keyword>
<keyword id="KW-0805">Transcription regulation</keyword>
<keyword id="KW-0879">Wnt signaling pathway</keyword>
<dbReference type="EMBL" id="AB052691">
    <property type="protein sequence ID" value="BAB60828.1"/>
    <property type="molecule type" value="mRNA"/>
</dbReference>
<dbReference type="EMBL" id="BC060350">
    <property type="protein sequence ID" value="AAH60350.1"/>
    <property type="molecule type" value="mRNA"/>
</dbReference>
<dbReference type="SMR" id="Q90ZH9"/>
<dbReference type="DNASU" id="398765"/>
<dbReference type="GeneID" id="398765"/>
<dbReference type="KEGG" id="xla:398765"/>
<dbReference type="AGR" id="Xenbase:XB-GENE-6255435"/>
<dbReference type="CTD" id="398765"/>
<dbReference type="Xenbase" id="XB-GENE-6255435">
    <property type="gene designation" value="sox17a.S"/>
</dbReference>
<dbReference type="OMA" id="HYRDCQS"/>
<dbReference type="OrthoDB" id="6247875at2759"/>
<dbReference type="Proteomes" id="UP000186698">
    <property type="component" value="Chromosome 6S"/>
</dbReference>
<dbReference type="Bgee" id="398765">
    <property type="expression patterns" value="Expressed in gastrula and 18 other cell types or tissues"/>
</dbReference>
<dbReference type="GO" id="GO:0005634">
    <property type="term" value="C:nucleus"/>
    <property type="evidence" value="ECO:0000250"/>
    <property type="project" value="UniProtKB"/>
</dbReference>
<dbReference type="GO" id="GO:0008013">
    <property type="term" value="F:beta-catenin binding"/>
    <property type="evidence" value="ECO:0000250"/>
    <property type="project" value="UniProtKB"/>
</dbReference>
<dbReference type="GO" id="GO:0001228">
    <property type="term" value="F:DNA-binding transcription activator activity, RNA polymerase II-specific"/>
    <property type="evidence" value="ECO:0000318"/>
    <property type="project" value="GO_Central"/>
</dbReference>
<dbReference type="GO" id="GO:0000978">
    <property type="term" value="F:RNA polymerase II cis-regulatory region sequence-specific DNA binding"/>
    <property type="evidence" value="ECO:0000318"/>
    <property type="project" value="GO_Central"/>
</dbReference>
<dbReference type="GO" id="GO:0043565">
    <property type="term" value="F:sequence-specific DNA binding"/>
    <property type="evidence" value="ECO:0000314"/>
    <property type="project" value="UniProtKB"/>
</dbReference>
<dbReference type="GO" id="GO:0001525">
    <property type="term" value="P:angiogenesis"/>
    <property type="evidence" value="ECO:0000318"/>
    <property type="project" value="GO_Central"/>
</dbReference>
<dbReference type="GO" id="GO:0042074">
    <property type="term" value="P:cell migration involved in gastrulation"/>
    <property type="evidence" value="ECO:0000315"/>
    <property type="project" value="UniProtKB"/>
</dbReference>
<dbReference type="GO" id="GO:0007492">
    <property type="term" value="P:endoderm development"/>
    <property type="evidence" value="ECO:0000315"/>
    <property type="project" value="UniProtKB"/>
</dbReference>
<dbReference type="GO" id="GO:0001706">
    <property type="term" value="P:endoderm formation"/>
    <property type="evidence" value="ECO:0000318"/>
    <property type="project" value="GO_Central"/>
</dbReference>
<dbReference type="GO" id="GO:0007507">
    <property type="term" value="P:heart development"/>
    <property type="evidence" value="ECO:0000318"/>
    <property type="project" value="GO_Central"/>
</dbReference>
<dbReference type="GO" id="GO:0007442">
    <property type="term" value="P:hindgut morphogenesis"/>
    <property type="evidence" value="ECO:0000315"/>
    <property type="project" value="UniProtKB"/>
</dbReference>
<dbReference type="GO" id="GO:0007494">
    <property type="term" value="P:midgut development"/>
    <property type="evidence" value="ECO:0000315"/>
    <property type="project" value="UniProtKB"/>
</dbReference>
<dbReference type="GO" id="GO:0090090">
    <property type="term" value="P:negative regulation of canonical Wnt signaling pathway"/>
    <property type="evidence" value="ECO:0000318"/>
    <property type="project" value="GO_Central"/>
</dbReference>
<dbReference type="GO" id="GO:0045893">
    <property type="term" value="P:positive regulation of DNA-templated transcription"/>
    <property type="evidence" value="ECO:0000250"/>
    <property type="project" value="UniProtKB"/>
</dbReference>
<dbReference type="GO" id="GO:0045944">
    <property type="term" value="P:positive regulation of transcription by RNA polymerase II"/>
    <property type="evidence" value="ECO:0000250"/>
    <property type="project" value="UniProtKB"/>
</dbReference>
<dbReference type="GO" id="GO:0001570">
    <property type="term" value="P:vasculogenesis"/>
    <property type="evidence" value="ECO:0000318"/>
    <property type="project" value="GO_Central"/>
</dbReference>
<dbReference type="GO" id="GO:0016055">
    <property type="term" value="P:Wnt signaling pathway"/>
    <property type="evidence" value="ECO:0007669"/>
    <property type="project" value="UniProtKB-KW"/>
</dbReference>
<dbReference type="CDD" id="cd22047">
    <property type="entry name" value="HMG-box_SoxF_SOX17"/>
    <property type="match status" value="1"/>
</dbReference>
<dbReference type="FunFam" id="1.10.30.10:FF:000008">
    <property type="entry name" value="transcription factor SOX-7"/>
    <property type="match status" value="1"/>
</dbReference>
<dbReference type="Gene3D" id="1.10.30.10">
    <property type="entry name" value="High mobility group box domain"/>
    <property type="match status" value="1"/>
</dbReference>
<dbReference type="InterPro" id="IPR009071">
    <property type="entry name" value="HMG_box_dom"/>
</dbReference>
<dbReference type="InterPro" id="IPR036910">
    <property type="entry name" value="HMG_box_dom_sf"/>
</dbReference>
<dbReference type="InterPro" id="IPR033392">
    <property type="entry name" value="Sox7/17/18_central"/>
</dbReference>
<dbReference type="InterPro" id="IPR021934">
    <property type="entry name" value="Sox_C"/>
</dbReference>
<dbReference type="InterPro" id="IPR050140">
    <property type="entry name" value="SRY-related_HMG-box_TF-like"/>
</dbReference>
<dbReference type="PANTHER" id="PTHR10270">
    <property type="entry name" value="SOX TRANSCRIPTION FACTOR"/>
    <property type="match status" value="1"/>
</dbReference>
<dbReference type="PANTHER" id="PTHR10270:SF216">
    <property type="entry name" value="TRANSCRIPTION FACTOR SOX-17"/>
    <property type="match status" value="1"/>
</dbReference>
<dbReference type="Pfam" id="PF00505">
    <property type="entry name" value="HMG_box"/>
    <property type="match status" value="1"/>
</dbReference>
<dbReference type="Pfam" id="PF12067">
    <property type="entry name" value="Sox17_18_mid"/>
    <property type="match status" value="1"/>
</dbReference>
<dbReference type="SMART" id="SM00398">
    <property type="entry name" value="HMG"/>
    <property type="match status" value="1"/>
</dbReference>
<dbReference type="SUPFAM" id="SSF47095">
    <property type="entry name" value="HMG-box"/>
    <property type="match status" value="1"/>
</dbReference>
<dbReference type="PROSITE" id="PS50118">
    <property type="entry name" value="HMG_BOX_2"/>
    <property type="match status" value="1"/>
</dbReference>
<dbReference type="PROSITE" id="PS51516">
    <property type="entry name" value="SOX_C"/>
    <property type="match status" value="1"/>
</dbReference>
<name>S17AB_XENLA</name>
<sequence length="377" mass="42385">MSSPDGGYGSDDQNQGKCSVPIMMSGLGQCQWSEPMTSLGEGKLKSDANSRSKAEGRIRRPMNAFMVWAKDERKRLAQQNPDLHNAELSKMLGKSWKALSLAEKRPFVEEAERLRVQHMQDHPNYKYRPRRRKQVKRMKRAENGFMHMTEAQESAVMGTDGRMCLENFNLGFHEQTYPQLPQASHYREPQAMAPHYDGYSLPTPESSPLDLAEADPVFFTSPAQDECQMMPYSYNSSYTHQHNSGASMLVRQMPQTEQIGEGSPVEGMMACQSSPHMYYGQMYLPGSTRHHQHPQAGQPSPPPEAQQLGRADQTQQADMMAEDRTEFEQYLSYVSKSDLGMNYHGQESVGPTADNGPISSVLSDATTAVYYCNYPSA</sequence>
<reference evidence="12 14" key="1">
    <citation type="journal article" date="2002" name="Gene">
        <title>Expression and characterization of Xenopus laevis SRY-related cDNAs, xSox17alpha1, xSox17alpha2, xSox18alpha and xSox18beta.</title>
        <authorList>
            <person name="Hasegawa M."/>
            <person name="Hiraoka Y."/>
            <person name="Hagiuda J."/>
            <person name="Ogawa M."/>
            <person name="Aiso S."/>
        </authorList>
    </citation>
    <scope>NUCLEOTIDE SEQUENCE [MRNA]</scope>
    <scope>DNA-BINDING</scope>
    <scope>TISSUE SPECIFICITY</scope>
</reference>
<reference evidence="13" key="2">
    <citation type="submission" date="2003-10" db="EMBL/GenBank/DDBJ databases">
        <authorList>
            <consortium name="NIH - Xenopus Gene Collection (XGC) project"/>
        </authorList>
    </citation>
    <scope>NUCLEOTIDE SEQUENCE [LARGE SCALE MRNA]</scope>
    <source>
        <tissue evidence="13">Embryo</tissue>
    </source>
</reference>
<reference evidence="12" key="3">
    <citation type="journal article" date="2003" name="Mech. Dev.">
        <title>Redundant early and overlapping larval roles of Xsox17 subgroup genes in Xenopus endoderm development.</title>
        <authorList>
            <person name="Clements D."/>
            <person name="Cameleyre I."/>
            <person name="Woodland H.R."/>
        </authorList>
    </citation>
    <scope>FUNCTION</scope>
    <scope>TISSUE SPECIFICITY</scope>
</reference>
<reference evidence="12" key="4">
    <citation type="journal article" date="2004" name="Dev. Biol.">
        <title>Repression of nodal expression by maternal B1-type SOXs regulates germ layer formation in Xenopus and zebrafish.</title>
        <authorList>
            <person name="Zhang C."/>
            <person name="Basta T."/>
            <person name="Hernandez-Lagunas L."/>
            <person name="Simpson P."/>
            <person name="Stemple D.L."/>
            <person name="Artinger K.B."/>
            <person name="Klymkowsky M.W."/>
        </authorList>
    </citation>
    <scope>FUNCTION</scope>
</reference>
<reference evidence="12" key="5">
    <citation type="journal article" date="2004" name="Differentiation">
        <title>Early endodermal expression of the Xenopus Endodermin gene is driven by regulatory sequences containing essential Sox protein-binding elements.</title>
        <authorList>
            <person name="Ahmed N."/>
            <person name="Howard L."/>
            <person name="Woodland H.R."/>
        </authorList>
    </citation>
    <scope>FUNCTION</scope>
</reference>
<reference evidence="12" key="6">
    <citation type="journal article" date="2006" name="Development">
        <title>Global analysis of the transcriptional network controlling Xenopus endoderm formation.</title>
        <authorList>
            <person name="Sinner D."/>
            <person name="Kirilenko P."/>
            <person name="Rankin S."/>
            <person name="Wei E."/>
            <person name="Howard L."/>
            <person name="Kofron M."/>
            <person name="Heasman J."/>
            <person name="Woodland H.R."/>
            <person name="Zorn A.M."/>
        </authorList>
    </citation>
    <scope>FUNCTION</scope>
    <scope>TISSUE SPECIFICITY</scope>
    <scope>INDUCTION</scope>
</reference>
<evidence type="ECO:0000250" key="1">
    <source>
        <dbReference type="UniProtKB" id="Q3KQ35"/>
    </source>
</evidence>
<evidence type="ECO:0000250" key="2">
    <source>
        <dbReference type="UniProtKB" id="Q9H6I2"/>
    </source>
</evidence>
<evidence type="ECO:0000255" key="3">
    <source>
        <dbReference type="PROSITE-ProRule" id="PRU00267"/>
    </source>
</evidence>
<evidence type="ECO:0000255" key="4">
    <source>
        <dbReference type="PROSITE-ProRule" id="PRU00849"/>
    </source>
</evidence>
<evidence type="ECO:0000256" key="5">
    <source>
        <dbReference type="SAM" id="MobiDB-lite"/>
    </source>
</evidence>
<evidence type="ECO:0000269" key="6">
    <source>
    </source>
</evidence>
<evidence type="ECO:0000269" key="7">
    <source>
    </source>
</evidence>
<evidence type="ECO:0000269" key="8">
    <source>
    </source>
</evidence>
<evidence type="ECO:0000269" key="9">
    <source>
    </source>
</evidence>
<evidence type="ECO:0000269" key="10">
    <source>
    </source>
</evidence>
<evidence type="ECO:0000303" key="11">
    <source>
    </source>
</evidence>
<evidence type="ECO:0000305" key="12"/>
<evidence type="ECO:0000312" key="13">
    <source>
        <dbReference type="EMBL" id="AAH60350.1"/>
    </source>
</evidence>
<evidence type="ECO:0000312" key="14">
    <source>
        <dbReference type="EMBL" id="BAB60828.1"/>
    </source>
</evidence>
<feature type="chain" id="PRO_0000376051" description="Transcription factor Sox-17-alpha-B">
    <location>
        <begin position="1"/>
        <end position="377"/>
    </location>
</feature>
<feature type="domain" description="Sox C-terminal" evidence="4">
    <location>
        <begin position="262"/>
        <end position="376"/>
    </location>
</feature>
<feature type="DNA-binding region" description="HMG box" evidence="3">
    <location>
        <begin position="58"/>
        <end position="126"/>
    </location>
</feature>
<feature type="region of interest" description="Disordered" evidence="5">
    <location>
        <begin position="1"/>
        <end position="20"/>
    </location>
</feature>
<feature type="region of interest" description="Disordered" evidence="5">
    <location>
        <begin position="31"/>
        <end position="57"/>
    </location>
</feature>
<feature type="region of interest" description="Disordered" evidence="5">
    <location>
        <begin position="282"/>
        <end position="321"/>
    </location>
</feature>
<feature type="region of interest" description="Required for transcriptional activity and interaction with ctnnb1" evidence="1">
    <location>
        <begin position="326"/>
        <end position="331"/>
    </location>
</feature>
<feature type="short sequence motif" description="9aaTAD" evidence="2">
    <location>
        <begin position="325"/>
        <end position="333"/>
    </location>
</feature>
<feature type="compositionally biased region" description="Basic and acidic residues" evidence="5">
    <location>
        <begin position="42"/>
        <end position="57"/>
    </location>
</feature>
<feature type="sequence conflict" description="In Ref. 2; AAH60350." evidence="12" ref="2">
    <original>S</original>
    <variation>A</variation>
    <location>
        <position position="33"/>
    </location>
</feature>
<feature type="sequence conflict" description="In Ref. 2; AAH60350." evidence="12" ref="2">
    <original>S</original>
    <variation>Y</variation>
    <location>
        <position position="50"/>
    </location>
</feature>
<feature type="sequence conflict" description="In Ref. 2; AAH60350." evidence="12" ref="2">
    <original>G</original>
    <variation>T</variation>
    <location>
        <position position="56"/>
    </location>
</feature>
<feature type="sequence conflict" description="In Ref. 2; AAH60350." evidence="12" ref="2">
    <original>T</original>
    <variation>A</variation>
    <location>
        <position position="159"/>
    </location>
</feature>
<feature type="sequence conflict" description="In Ref. 2; AAH60350." evidence="12" ref="2">
    <original>E</original>
    <variation>Q</variation>
    <location>
        <position position="261"/>
    </location>
</feature>
<feature type="sequence conflict" description="In Ref. 2; AAH60350." evidence="12" ref="2">
    <original>N</original>
    <variation>H</variation>
    <location>
        <position position="342"/>
    </location>
</feature>
<feature type="sequence conflict" description="In Ref. 2; AAH60350." evidence="12" ref="2">
    <original>G</original>
    <variation>V</variation>
    <location>
        <position position="350"/>
    </location>
</feature>
<proteinExistence type="evidence at protein level"/>
<accession>Q90ZH9</accession>
<accession>Q6PAE5</accession>
<gene>
    <name type="primary">sox17a-b</name>
    <name evidence="11" type="synonym">sox17a2</name>
</gene>
<organism>
    <name type="scientific">Xenopus laevis</name>
    <name type="common">African clawed frog</name>
    <dbReference type="NCBI Taxonomy" id="8355"/>
    <lineage>
        <taxon>Eukaryota</taxon>
        <taxon>Metazoa</taxon>
        <taxon>Chordata</taxon>
        <taxon>Craniata</taxon>
        <taxon>Vertebrata</taxon>
        <taxon>Euteleostomi</taxon>
        <taxon>Amphibia</taxon>
        <taxon>Batrachia</taxon>
        <taxon>Anura</taxon>
        <taxon>Pipoidea</taxon>
        <taxon>Pipidae</taxon>
        <taxon>Xenopodinae</taxon>
        <taxon>Xenopus</taxon>
        <taxon>Xenopus</taxon>
    </lineage>
</organism>
<protein>
    <recommendedName>
        <fullName>Transcription factor Sox-17-alpha-B</fullName>
        <shortName evidence="14">xSox17alpha2</shortName>
    </recommendedName>
</protein>
<comment type="function">
    <text evidence="1 6 7 8 9 10">Transcription activator. Binds to the DNA sequence 5'-AACAAT-3'. All of the sox17 proteins are required for embryonic endoderm development and gastrulation movements, and show some redundancy in function. In addition, the sox17 proteins have distinct but overlapping roles in later gut development. Acts downstream of vegt-signaling in endoderm differentiation to induce a range of endodermal genes both directly (including endodermin and dhh/chh) and indirectly. Also represses wnt-responsive genes to inhibit wnt/beta-catenin signaling.</text>
</comment>
<comment type="subunit">
    <text evidence="1">Interacts (via C-terminus) with ctnnb1/beta-catenin (via Armadillo repeats); this interaction is required for inhibition of wnt-signaling.</text>
</comment>
<comment type="subcellular location">
    <subcellularLocation>
        <location evidence="1 3">Nucleus</location>
    </subcellularLocation>
</comment>
<comment type="tissue specificity">
    <text evidence="6 7 10">Enriched in the embryonic endoderm. Expressed in the embryonic gut, with strong expression in the posterior gut during tailbud stages. Expressed at a low level in the adult kidney and spleen.</text>
</comment>
<comment type="induction">
    <text evidence="10">Involved in multiple regulatory feedback loops with other endodermal factors, including the nodal-related factors/Xnrs. Autoinduces.</text>
</comment>
<comment type="domain">
    <text evidence="2">The 9aaTAD motif is a transactivation domain present in a large number of yeast and animal transcription factors.</text>
</comment>